<dbReference type="EC" id="7.1.2.2" evidence="1"/>
<dbReference type="EMBL" id="CP000561">
    <property type="protein sequence ID" value="ABO09504.1"/>
    <property type="molecule type" value="Genomic_DNA"/>
</dbReference>
<dbReference type="RefSeq" id="WP_011850762.1">
    <property type="nucleotide sequence ID" value="NC_009073.1"/>
</dbReference>
<dbReference type="SMR" id="A3MXY7"/>
<dbReference type="STRING" id="410359.Pcal_2089"/>
<dbReference type="GeneID" id="4908665"/>
<dbReference type="KEGG" id="pcl:Pcal_2089"/>
<dbReference type="eggNOG" id="arCOG00868">
    <property type="taxonomic scope" value="Archaea"/>
</dbReference>
<dbReference type="HOGENOM" id="CLU_008162_3_1_2"/>
<dbReference type="OrthoDB" id="115235at2157"/>
<dbReference type="Proteomes" id="UP000001431">
    <property type="component" value="Chromosome"/>
</dbReference>
<dbReference type="GO" id="GO:0005886">
    <property type="term" value="C:plasma membrane"/>
    <property type="evidence" value="ECO:0007669"/>
    <property type="project" value="UniProtKB-SubCell"/>
</dbReference>
<dbReference type="GO" id="GO:0005524">
    <property type="term" value="F:ATP binding"/>
    <property type="evidence" value="ECO:0007669"/>
    <property type="project" value="UniProtKB-UniRule"/>
</dbReference>
<dbReference type="GO" id="GO:0046933">
    <property type="term" value="F:proton-transporting ATP synthase activity, rotational mechanism"/>
    <property type="evidence" value="ECO:0007669"/>
    <property type="project" value="UniProtKB-UniRule"/>
</dbReference>
<dbReference type="GO" id="GO:0046961">
    <property type="term" value="F:proton-transporting ATPase activity, rotational mechanism"/>
    <property type="evidence" value="ECO:0007669"/>
    <property type="project" value="InterPro"/>
</dbReference>
<dbReference type="GO" id="GO:0042777">
    <property type="term" value="P:proton motive force-driven plasma membrane ATP synthesis"/>
    <property type="evidence" value="ECO:0007669"/>
    <property type="project" value="UniProtKB-UniRule"/>
</dbReference>
<dbReference type="CDD" id="cd18111">
    <property type="entry name" value="ATP-synt_V_A-type_alpha_C"/>
    <property type="match status" value="1"/>
</dbReference>
<dbReference type="CDD" id="cd18119">
    <property type="entry name" value="ATP-synt_V_A-type_alpha_N"/>
    <property type="match status" value="1"/>
</dbReference>
<dbReference type="CDD" id="cd01134">
    <property type="entry name" value="V_A-ATPase_A"/>
    <property type="match status" value="1"/>
</dbReference>
<dbReference type="FunFam" id="2.40.30.20:FF:000002">
    <property type="entry name" value="V-type proton ATPase catalytic subunit A"/>
    <property type="match status" value="1"/>
</dbReference>
<dbReference type="Gene3D" id="2.40.30.20">
    <property type="match status" value="1"/>
</dbReference>
<dbReference type="Gene3D" id="2.40.50.100">
    <property type="match status" value="1"/>
</dbReference>
<dbReference type="Gene3D" id="1.10.1140.10">
    <property type="entry name" value="Bovine Mitochondrial F1-atpase, Atp Synthase Beta Chain, Chain D, domain 3"/>
    <property type="match status" value="1"/>
</dbReference>
<dbReference type="Gene3D" id="3.40.50.300">
    <property type="entry name" value="P-loop containing nucleotide triphosphate hydrolases"/>
    <property type="match status" value="1"/>
</dbReference>
<dbReference type="HAMAP" id="MF_00309">
    <property type="entry name" value="ATP_synth_A_arch"/>
    <property type="match status" value="1"/>
</dbReference>
<dbReference type="InterPro" id="IPR055190">
    <property type="entry name" value="ATP-synt_VA_C"/>
</dbReference>
<dbReference type="InterPro" id="IPR031686">
    <property type="entry name" value="ATP-synth_a_Xtn"/>
</dbReference>
<dbReference type="InterPro" id="IPR023366">
    <property type="entry name" value="ATP_synth_asu-like_sf"/>
</dbReference>
<dbReference type="InterPro" id="IPR004100">
    <property type="entry name" value="ATPase_F1/V1/A1_a/bsu_N"/>
</dbReference>
<dbReference type="InterPro" id="IPR036121">
    <property type="entry name" value="ATPase_F1/V1/A1_a/bsu_N_sf"/>
</dbReference>
<dbReference type="InterPro" id="IPR000194">
    <property type="entry name" value="ATPase_F1/V1/A1_a/bsu_nucl-bd"/>
</dbReference>
<dbReference type="InterPro" id="IPR024034">
    <property type="entry name" value="ATPase_F1/V1_b/a_C"/>
</dbReference>
<dbReference type="InterPro" id="IPR027417">
    <property type="entry name" value="P-loop_NTPase"/>
</dbReference>
<dbReference type="InterPro" id="IPR022878">
    <property type="entry name" value="V-ATPase_asu"/>
</dbReference>
<dbReference type="NCBIfam" id="NF003220">
    <property type="entry name" value="PRK04192.1"/>
    <property type="match status" value="1"/>
</dbReference>
<dbReference type="PANTHER" id="PTHR43607:SF1">
    <property type="entry name" value="H(+)-TRANSPORTING TWO-SECTOR ATPASE"/>
    <property type="match status" value="1"/>
</dbReference>
<dbReference type="PANTHER" id="PTHR43607">
    <property type="entry name" value="V-TYPE PROTON ATPASE CATALYTIC SUBUNIT A"/>
    <property type="match status" value="1"/>
</dbReference>
<dbReference type="Pfam" id="PF00006">
    <property type="entry name" value="ATP-synt_ab"/>
    <property type="match status" value="1"/>
</dbReference>
<dbReference type="Pfam" id="PF02874">
    <property type="entry name" value="ATP-synt_ab_N"/>
    <property type="match status" value="1"/>
</dbReference>
<dbReference type="Pfam" id="PF16886">
    <property type="entry name" value="ATP-synt_ab_Xtn"/>
    <property type="match status" value="1"/>
</dbReference>
<dbReference type="Pfam" id="PF22919">
    <property type="entry name" value="ATP-synt_VA_C"/>
    <property type="match status" value="1"/>
</dbReference>
<dbReference type="SUPFAM" id="SSF47917">
    <property type="entry name" value="C-terminal domain of alpha and beta subunits of F1 ATP synthase"/>
    <property type="match status" value="1"/>
</dbReference>
<dbReference type="SUPFAM" id="SSF50615">
    <property type="entry name" value="N-terminal domain of alpha and beta subunits of F1 ATP synthase"/>
    <property type="match status" value="1"/>
</dbReference>
<dbReference type="SUPFAM" id="SSF52540">
    <property type="entry name" value="P-loop containing nucleoside triphosphate hydrolases"/>
    <property type="match status" value="1"/>
</dbReference>
<protein>
    <recommendedName>
        <fullName evidence="1">A-type ATP synthase subunit A</fullName>
        <ecNumber evidence="1">7.1.2.2</ecNumber>
    </recommendedName>
</protein>
<proteinExistence type="inferred from homology"/>
<sequence length="594" mass="66227">MSGRIEYISGPVVKAELPGARLYELVFVGELKLFGEVVRIQGDKAFIQVYEDTTGLKPGEPVERTGEPLSAWLGPTILGRIYDGVQRPLKDIESISKSPFIARGIGYDKAPPLDLNAVFDFKPAVKPGDFVQPGDVLGSVKETELITHYITYPPLPENAPGEVEWVADGKYKVDDVIARIKTKRGVVEVKMWHKWPVRRPRPFREKLPPVEPLITGVRVIDTMFPIAKGGTAAVPGPFGSGKTVMIRTLSMFAQSRIIIPVLCGERGNEAADALQGLLKLKDPSTGRPLLERTTIIVNTSNMPVAAREASVYMGTTLGEYFRDQGYDVLVLADSTSRWAEAMREVALRIGEMPSEEGYPAYLPTRLAEFYERAGRVVLIGSGERVGSLTIAASVSPPGGDFTEPVTSNTLRFIGAFWPLSPRLAYSRHYPAIDWLMAFSRYVDTVEVWWSKNVSPEWRRIRDVLQSILVKEAELQEIVRILGTEALSEYEKHILNVAFMIREGFLKQDAYNPVDTPTSPIKQFLLMKAIYVYYEEGLKAIEAGVPASILRELDTVKRLPRLRMELTNDVAKEELTKFIEALTSEIRSTTAGRRP</sequence>
<keyword id="KW-0066">ATP synthesis</keyword>
<keyword id="KW-0067">ATP-binding</keyword>
<keyword id="KW-1003">Cell membrane</keyword>
<keyword id="KW-0375">Hydrogen ion transport</keyword>
<keyword id="KW-0406">Ion transport</keyword>
<keyword id="KW-0472">Membrane</keyword>
<keyword id="KW-0547">Nucleotide-binding</keyword>
<keyword id="KW-1278">Translocase</keyword>
<keyword id="KW-0813">Transport</keyword>
<feature type="chain" id="PRO_1000059350" description="A-type ATP synthase subunit A">
    <location>
        <begin position="1"/>
        <end position="594"/>
    </location>
</feature>
<feature type="binding site" evidence="1">
    <location>
        <begin position="236"/>
        <end position="243"/>
    </location>
    <ligand>
        <name>ATP</name>
        <dbReference type="ChEBI" id="CHEBI:30616"/>
    </ligand>
</feature>
<comment type="function">
    <text evidence="1">Component of the A-type ATP synthase that produces ATP from ADP in the presence of a proton gradient across the membrane. The A chain is the catalytic subunit.</text>
</comment>
<comment type="catalytic activity">
    <reaction evidence="1">
        <text>ATP + H2O + 4 H(+)(in) = ADP + phosphate + 5 H(+)(out)</text>
        <dbReference type="Rhea" id="RHEA:57720"/>
        <dbReference type="ChEBI" id="CHEBI:15377"/>
        <dbReference type="ChEBI" id="CHEBI:15378"/>
        <dbReference type="ChEBI" id="CHEBI:30616"/>
        <dbReference type="ChEBI" id="CHEBI:43474"/>
        <dbReference type="ChEBI" id="CHEBI:456216"/>
        <dbReference type="EC" id="7.1.2.2"/>
    </reaction>
</comment>
<comment type="subunit">
    <text evidence="1">Has multiple subunits with at least A(3), B(3), C, D, E, F, H, I and proteolipid K(x).</text>
</comment>
<comment type="subcellular location">
    <subcellularLocation>
        <location evidence="1">Cell membrane</location>
        <topology evidence="1">Peripheral membrane protein</topology>
    </subcellularLocation>
</comment>
<comment type="similarity">
    <text evidence="1">Belongs to the ATPase alpha/beta chains family.</text>
</comment>
<accession>A3MXY7</accession>
<gene>
    <name evidence="1" type="primary">atpA</name>
    <name type="ordered locus">Pcal_2089</name>
</gene>
<evidence type="ECO:0000255" key="1">
    <source>
        <dbReference type="HAMAP-Rule" id="MF_00309"/>
    </source>
</evidence>
<name>AATA_PYRCJ</name>
<organism>
    <name type="scientific">Pyrobaculum calidifontis (strain DSM 21063 / JCM 11548 / VA1)</name>
    <dbReference type="NCBI Taxonomy" id="410359"/>
    <lineage>
        <taxon>Archaea</taxon>
        <taxon>Thermoproteota</taxon>
        <taxon>Thermoprotei</taxon>
        <taxon>Thermoproteales</taxon>
        <taxon>Thermoproteaceae</taxon>
        <taxon>Pyrobaculum</taxon>
    </lineage>
</organism>
<reference key="1">
    <citation type="submission" date="2007-02" db="EMBL/GenBank/DDBJ databases">
        <title>Complete sequence of Pyrobaculum calidifontis JCM 11548.</title>
        <authorList>
            <consortium name="US DOE Joint Genome Institute"/>
            <person name="Copeland A."/>
            <person name="Lucas S."/>
            <person name="Lapidus A."/>
            <person name="Barry K."/>
            <person name="Glavina del Rio T."/>
            <person name="Dalin E."/>
            <person name="Tice H."/>
            <person name="Pitluck S."/>
            <person name="Chain P."/>
            <person name="Malfatti S."/>
            <person name="Shin M."/>
            <person name="Vergez L."/>
            <person name="Schmutz J."/>
            <person name="Larimer F."/>
            <person name="Land M."/>
            <person name="Hauser L."/>
            <person name="Kyrpides N."/>
            <person name="Mikhailova N."/>
            <person name="Cozen A.E."/>
            <person name="Fitz-Gibbon S.T."/>
            <person name="House C.H."/>
            <person name="Saltikov C."/>
            <person name="Lowe T.M."/>
            <person name="Richardson P."/>
        </authorList>
    </citation>
    <scope>NUCLEOTIDE SEQUENCE [LARGE SCALE GENOMIC DNA]</scope>
    <source>
        <strain>DSM 21063 / JCM 11548 / VA1</strain>
    </source>
</reference>